<feature type="chain" id="PRO_0000145870" description="Phosphoglycerate kinase, chloroplastic">
    <location>
        <begin position="1"/>
        <end position="15" status="greater than"/>
    </location>
</feature>
<feature type="non-terminal residue">
    <location>
        <position position="15"/>
    </location>
</feature>
<reference key="1">
    <citation type="journal article" date="1997" name="Planta">
        <title>Cytokinin affects nuclear- and plastome-encoded energy-converting plastid enzymes.</title>
        <authorList>
            <person name="Kasten B."/>
            <person name="Buck F."/>
            <person name="Nuske J."/>
            <person name="Reski R."/>
        </authorList>
    </citation>
    <scope>PROTEIN SEQUENCE</scope>
    <source>
        <tissue>Protonema</tissue>
    </source>
</reference>
<accession>P80659</accession>
<name>PGKH_PHYPA</name>
<proteinExistence type="evidence at protein level"/>
<protein>
    <recommendedName>
        <fullName>Phosphoglycerate kinase, chloroplastic</fullName>
        <ecNumber evidence="2">2.7.2.3</ecNumber>
    </recommendedName>
</protein>
<organism>
    <name type="scientific">Physcomitrium patens</name>
    <name type="common">Spreading-leaved earth moss</name>
    <name type="synonym">Physcomitrella patens</name>
    <dbReference type="NCBI Taxonomy" id="3218"/>
    <lineage>
        <taxon>Eukaryota</taxon>
        <taxon>Viridiplantae</taxon>
        <taxon>Streptophyta</taxon>
        <taxon>Embryophyta</taxon>
        <taxon>Bryophyta</taxon>
        <taxon>Bryophytina</taxon>
        <taxon>Bryopsida</taxon>
        <taxon>Funariidae</taxon>
        <taxon>Funariales</taxon>
        <taxon>Funariaceae</taxon>
        <taxon>Physcomitrium</taxon>
    </lineage>
</organism>
<keyword id="KW-0067">ATP-binding</keyword>
<keyword id="KW-0113">Calvin cycle</keyword>
<keyword id="KW-0150">Chloroplast</keyword>
<keyword id="KW-0903">Direct protein sequencing</keyword>
<keyword id="KW-0418">Kinase</keyword>
<keyword id="KW-0547">Nucleotide-binding</keyword>
<keyword id="KW-0934">Plastid</keyword>
<keyword id="KW-1185">Reference proteome</keyword>
<keyword id="KW-0808">Transferase</keyword>
<dbReference type="EC" id="2.7.2.3" evidence="2"/>
<dbReference type="InParanoid" id="P80659"/>
<dbReference type="UniPathway" id="UPA00116"/>
<dbReference type="Proteomes" id="UP000006727">
    <property type="component" value="Unplaced"/>
</dbReference>
<dbReference type="GO" id="GO:0009507">
    <property type="term" value="C:chloroplast"/>
    <property type="evidence" value="ECO:0007669"/>
    <property type="project" value="UniProtKB-SubCell"/>
</dbReference>
<dbReference type="GO" id="GO:0005524">
    <property type="term" value="F:ATP binding"/>
    <property type="evidence" value="ECO:0007669"/>
    <property type="project" value="UniProtKB-KW"/>
</dbReference>
<dbReference type="GO" id="GO:0004618">
    <property type="term" value="F:phosphoglycerate kinase activity"/>
    <property type="evidence" value="ECO:0007669"/>
    <property type="project" value="UniProtKB-EC"/>
</dbReference>
<dbReference type="GO" id="GO:0019253">
    <property type="term" value="P:reductive pentose-phosphate cycle"/>
    <property type="evidence" value="ECO:0007669"/>
    <property type="project" value="UniProtKB-UniPathway"/>
</dbReference>
<evidence type="ECO:0000250" key="1"/>
<evidence type="ECO:0000250" key="2">
    <source>
        <dbReference type="UniProtKB" id="P00558"/>
    </source>
</evidence>
<evidence type="ECO:0000305" key="3"/>
<sequence length="15" mass="1531">ALTEQASKVALTADL</sequence>
<comment type="catalytic activity">
    <reaction evidence="2">
        <text>(2R)-3-phosphoglycerate + ATP = (2R)-3-phospho-glyceroyl phosphate + ADP</text>
        <dbReference type="Rhea" id="RHEA:14801"/>
        <dbReference type="ChEBI" id="CHEBI:30616"/>
        <dbReference type="ChEBI" id="CHEBI:57604"/>
        <dbReference type="ChEBI" id="CHEBI:58272"/>
        <dbReference type="ChEBI" id="CHEBI:456216"/>
        <dbReference type="EC" id="2.7.2.3"/>
    </reaction>
</comment>
<comment type="cofactor">
    <cofactor evidence="2">
        <name>Mg(2+)</name>
        <dbReference type="ChEBI" id="CHEBI:18420"/>
    </cofactor>
</comment>
<comment type="pathway">
    <text>Carbohydrate biosynthesis; Calvin cycle.</text>
</comment>
<comment type="subunit">
    <text evidence="1">Monomer.</text>
</comment>
<comment type="subcellular location">
    <subcellularLocation>
        <location>Plastid</location>
        <location>Chloroplast</location>
    </subcellularLocation>
</comment>
<comment type="similarity">
    <text evidence="3">Belongs to the phosphoglycerate kinase family.</text>
</comment>